<feature type="chain" id="PRO_0000386175" description="GTPase Obg">
    <location>
        <begin position="1"/>
        <end position="363"/>
    </location>
</feature>
<feature type="domain" description="Obg" evidence="2">
    <location>
        <begin position="1"/>
        <end position="159"/>
    </location>
</feature>
<feature type="domain" description="OBG-type G" evidence="1">
    <location>
        <begin position="160"/>
        <end position="327"/>
    </location>
</feature>
<feature type="region of interest" description="Disordered" evidence="3">
    <location>
        <begin position="332"/>
        <end position="363"/>
    </location>
</feature>
<feature type="compositionally biased region" description="Acidic residues" evidence="3">
    <location>
        <begin position="353"/>
        <end position="363"/>
    </location>
</feature>
<feature type="binding site" evidence="1">
    <location>
        <begin position="166"/>
        <end position="173"/>
    </location>
    <ligand>
        <name>GTP</name>
        <dbReference type="ChEBI" id="CHEBI:37565"/>
    </ligand>
</feature>
<feature type="binding site" evidence="1">
    <location>
        <position position="173"/>
    </location>
    <ligand>
        <name>Mg(2+)</name>
        <dbReference type="ChEBI" id="CHEBI:18420"/>
    </ligand>
</feature>
<feature type="binding site" evidence="1">
    <location>
        <begin position="191"/>
        <end position="195"/>
    </location>
    <ligand>
        <name>GTP</name>
        <dbReference type="ChEBI" id="CHEBI:37565"/>
    </ligand>
</feature>
<feature type="binding site" evidence="1">
    <location>
        <position position="193"/>
    </location>
    <ligand>
        <name>Mg(2+)</name>
        <dbReference type="ChEBI" id="CHEBI:18420"/>
    </ligand>
</feature>
<feature type="binding site" evidence="1">
    <location>
        <begin position="212"/>
        <end position="215"/>
    </location>
    <ligand>
        <name>GTP</name>
        <dbReference type="ChEBI" id="CHEBI:37565"/>
    </ligand>
</feature>
<feature type="binding site" evidence="1">
    <location>
        <begin position="279"/>
        <end position="282"/>
    </location>
    <ligand>
        <name>GTP</name>
        <dbReference type="ChEBI" id="CHEBI:37565"/>
    </ligand>
</feature>
<feature type="binding site" evidence="1">
    <location>
        <begin position="308"/>
        <end position="310"/>
    </location>
    <ligand>
        <name>GTP</name>
        <dbReference type="ChEBI" id="CHEBI:37565"/>
    </ligand>
</feature>
<evidence type="ECO:0000255" key="1">
    <source>
        <dbReference type="HAMAP-Rule" id="MF_01454"/>
    </source>
</evidence>
<evidence type="ECO:0000255" key="2">
    <source>
        <dbReference type="PROSITE-ProRule" id="PRU01231"/>
    </source>
</evidence>
<evidence type="ECO:0000256" key="3">
    <source>
        <dbReference type="SAM" id="MobiDB-lite"/>
    </source>
</evidence>
<dbReference type="EC" id="3.6.5.-" evidence="1"/>
<dbReference type="EMBL" id="CP000133">
    <property type="protein sequence ID" value="ABC92810.1"/>
    <property type="molecule type" value="Genomic_DNA"/>
</dbReference>
<dbReference type="SMR" id="Q2K2X6"/>
<dbReference type="KEGG" id="ret:RHE_CH04067"/>
<dbReference type="eggNOG" id="COG0536">
    <property type="taxonomic scope" value="Bacteria"/>
</dbReference>
<dbReference type="HOGENOM" id="CLU_011747_2_0_5"/>
<dbReference type="OrthoDB" id="9807318at2"/>
<dbReference type="Proteomes" id="UP000001936">
    <property type="component" value="Chromosome"/>
</dbReference>
<dbReference type="GO" id="GO:0005737">
    <property type="term" value="C:cytoplasm"/>
    <property type="evidence" value="ECO:0007669"/>
    <property type="project" value="UniProtKB-SubCell"/>
</dbReference>
<dbReference type="GO" id="GO:0005525">
    <property type="term" value="F:GTP binding"/>
    <property type="evidence" value="ECO:0007669"/>
    <property type="project" value="UniProtKB-UniRule"/>
</dbReference>
<dbReference type="GO" id="GO:0003924">
    <property type="term" value="F:GTPase activity"/>
    <property type="evidence" value="ECO:0007669"/>
    <property type="project" value="UniProtKB-UniRule"/>
</dbReference>
<dbReference type="GO" id="GO:0000287">
    <property type="term" value="F:magnesium ion binding"/>
    <property type="evidence" value="ECO:0007669"/>
    <property type="project" value="InterPro"/>
</dbReference>
<dbReference type="GO" id="GO:0042254">
    <property type="term" value="P:ribosome biogenesis"/>
    <property type="evidence" value="ECO:0007669"/>
    <property type="project" value="UniProtKB-UniRule"/>
</dbReference>
<dbReference type="CDD" id="cd01898">
    <property type="entry name" value="Obg"/>
    <property type="match status" value="1"/>
</dbReference>
<dbReference type="FunFam" id="2.70.210.12:FF:000001">
    <property type="entry name" value="GTPase Obg"/>
    <property type="match status" value="1"/>
</dbReference>
<dbReference type="Gene3D" id="2.70.210.12">
    <property type="entry name" value="GTP1/OBG domain"/>
    <property type="match status" value="1"/>
</dbReference>
<dbReference type="Gene3D" id="3.40.50.300">
    <property type="entry name" value="P-loop containing nucleotide triphosphate hydrolases"/>
    <property type="match status" value="1"/>
</dbReference>
<dbReference type="HAMAP" id="MF_01454">
    <property type="entry name" value="GTPase_Obg"/>
    <property type="match status" value="1"/>
</dbReference>
<dbReference type="InterPro" id="IPR031167">
    <property type="entry name" value="G_OBG"/>
</dbReference>
<dbReference type="InterPro" id="IPR006073">
    <property type="entry name" value="GTP-bd"/>
</dbReference>
<dbReference type="InterPro" id="IPR014100">
    <property type="entry name" value="GTP-bd_Obg/CgtA"/>
</dbReference>
<dbReference type="InterPro" id="IPR006074">
    <property type="entry name" value="GTP1-OBG_CS"/>
</dbReference>
<dbReference type="InterPro" id="IPR006169">
    <property type="entry name" value="GTP1_OBG_dom"/>
</dbReference>
<dbReference type="InterPro" id="IPR036726">
    <property type="entry name" value="GTP1_OBG_dom_sf"/>
</dbReference>
<dbReference type="InterPro" id="IPR045086">
    <property type="entry name" value="OBG_GTPase"/>
</dbReference>
<dbReference type="InterPro" id="IPR027417">
    <property type="entry name" value="P-loop_NTPase"/>
</dbReference>
<dbReference type="InterPro" id="IPR005225">
    <property type="entry name" value="Small_GTP-bd"/>
</dbReference>
<dbReference type="NCBIfam" id="TIGR02729">
    <property type="entry name" value="Obg_CgtA"/>
    <property type="match status" value="1"/>
</dbReference>
<dbReference type="NCBIfam" id="NF008955">
    <property type="entry name" value="PRK12297.1"/>
    <property type="match status" value="1"/>
</dbReference>
<dbReference type="NCBIfam" id="NF008956">
    <property type="entry name" value="PRK12299.1"/>
    <property type="match status" value="1"/>
</dbReference>
<dbReference type="NCBIfam" id="TIGR00231">
    <property type="entry name" value="small_GTP"/>
    <property type="match status" value="1"/>
</dbReference>
<dbReference type="PANTHER" id="PTHR11702">
    <property type="entry name" value="DEVELOPMENTALLY REGULATED GTP-BINDING PROTEIN-RELATED"/>
    <property type="match status" value="1"/>
</dbReference>
<dbReference type="PANTHER" id="PTHR11702:SF31">
    <property type="entry name" value="MITOCHONDRIAL RIBOSOME-ASSOCIATED GTPASE 2"/>
    <property type="match status" value="1"/>
</dbReference>
<dbReference type="Pfam" id="PF01018">
    <property type="entry name" value="GTP1_OBG"/>
    <property type="match status" value="1"/>
</dbReference>
<dbReference type="Pfam" id="PF01926">
    <property type="entry name" value="MMR_HSR1"/>
    <property type="match status" value="1"/>
</dbReference>
<dbReference type="PIRSF" id="PIRSF002401">
    <property type="entry name" value="GTP_bd_Obg/CgtA"/>
    <property type="match status" value="1"/>
</dbReference>
<dbReference type="PRINTS" id="PR00326">
    <property type="entry name" value="GTP1OBG"/>
</dbReference>
<dbReference type="SUPFAM" id="SSF82051">
    <property type="entry name" value="Obg GTP-binding protein N-terminal domain"/>
    <property type="match status" value="1"/>
</dbReference>
<dbReference type="SUPFAM" id="SSF52540">
    <property type="entry name" value="P-loop containing nucleoside triphosphate hydrolases"/>
    <property type="match status" value="1"/>
</dbReference>
<dbReference type="PROSITE" id="PS51710">
    <property type="entry name" value="G_OBG"/>
    <property type="match status" value="1"/>
</dbReference>
<dbReference type="PROSITE" id="PS00905">
    <property type="entry name" value="GTP1_OBG"/>
    <property type="match status" value="1"/>
</dbReference>
<dbReference type="PROSITE" id="PS51883">
    <property type="entry name" value="OBG"/>
    <property type="match status" value="1"/>
</dbReference>
<reference key="1">
    <citation type="journal article" date="2006" name="Proc. Natl. Acad. Sci. U.S.A.">
        <title>The partitioned Rhizobium etli genome: genetic and metabolic redundancy in seven interacting replicons.</title>
        <authorList>
            <person name="Gonzalez V."/>
            <person name="Santamaria R.I."/>
            <person name="Bustos P."/>
            <person name="Hernandez-Gonzalez I."/>
            <person name="Medrano-Soto A."/>
            <person name="Moreno-Hagelsieb G."/>
            <person name="Janga S.C."/>
            <person name="Ramirez M.A."/>
            <person name="Jimenez-Jacinto V."/>
            <person name="Collado-Vides J."/>
            <person name="Davila G."/>
        </authorList>
    </citation>
    <scope>NUCLEOTIDE SEQUENCE [LARGE SCALE GENOMIC DNA]</scope>
    <source>
        <strain>ATCC 51251 / DSM 11541 / JCM 21823 / NBRC 15573 / CFN 42</strain>
    </source>
</reference>
<sequence length="363" mass="39498">MKFLDEAKVYIRSGDGGAGSVSFRREKFIEFGGPDGGDGGRGGDVWVEAVNGLNTLIDFRYQQHFKATIGTHGMGRNRTGANGSDVTLKVPVGTQIFEEDRETMICDLTEEGQRYCLAHGGNGGFGNAHFKTSVNQAPDWANPGLPGEEKTIWLRLKLIADAGLVGLPNAGKSTFLASVTRARPKIANYPFTTLHPNLGVATVDEREFILADIPGLIEGAHEGVGIGDRFLGHVERTRVLLHLVSAQEEKVGKAYKTVKHELEAYGNELTDKPEIVALSQIDVLDEAELKKKTKELAKACGRTPFQISAVTGRGMTEVLRALRDIIVQENAEEKPAKAPKLRHRDMIVSEENNQGEDGADDQP</sequence>
<protein>
    <recommendedName>
        <fullName evidence="1">GTPase Obg</fullName>
        <ecNumber evidence="1">3.6.5.-</ecNumber>
    </recommendedName>
    <alternativeName>
        <fullName evidence="1">GTP-binding protein Obg</fullName>
    </alternativeName>
</protein>
<accession>Q2K2X6</accession>
<comment type="function">
    <text evidence="1">An essential GTPase which binds GTP, GDP and possibly (p)ppGpp with moderate affinity, with high nucleotide exchange rates and a fairly low GTP hydrolysis rate. Plays a role in control of the cell cycle, stress response, ribosome biogenesis and in those bacteria that undergo differentiation, in morphogenesis control.</text>
</comment>
<comment type="cofactor">
    <cofactor evidence="1">
        <name>Mg(2+)</name>
        <dbReference type="ChEBI" id="CHEBI:18420"/>
    </cofactor>
</comment>
<comment type="subunit">
    <text evidence="1">Monomer.</text>
</comment>
<comment type="subcellular location">
    <subcellularLocation>
        <location evidence="1">Cytoplasm</location>
    </subcellularLocation>
</comment>
<comment type="similarity">
    <text evidence="1">Belongs to the TRAFAC class OBG-HflX-like GTPase superfamily. OBG GTPase family.</text>
</comment>
<keyword id="KW-0963">Cytoplasm</keyword>
<keyword id="KW-0342">GTP-binding</keyword>
<keyword id="KW-0378">Hydrolase</keyword>
<keyword id="KW-0460">Magnesium</keyword>
<keyword id="KW-0479">Metal-binding</keyword>
<keyword id="KW-0547">Nucleotide-binding</keyword>
<keyword id="KW-1185">Reference proteome</keyword>
<gene>
    <name evidence="1" type="primary">obg</name>
    <name type="ordered locus">RHE_CH04067</name>
</gene>
<name>OBG_RHIEC</name>
<proteinExistence type="inferred from homology"/>
<organism>
    <name type="scientific">Rhizobium etli (strain ATCC 51251 / DSM 11541 / JCM 21823 / NBRC 15573 / CFN 42)</name>
    <dbReference type="NCBI Taxonomy" id="347834"/>
    <lineage>
        <taxon>Bacteria</taxon>
        <taxon>Pseudomonadati</taxon>
        <taxon>Pseudomonadota</taxon>
        <taxon>Alphaproteobacteria</taxon>
        <taxon>Hyphomicrobiales</taxon>
        <taxon>Rhizobiaceae</taxon>
        <taxon>Rhizobium/Agrobacterium group</taxon>
        <taxon>Rhizobium</taxon>
    </lineage>
</organism>